<evidence type="ECO:0000250" key="1"/>
<evidence type="ECO:0000250" key="2">
    <source>
        <dbReference type="UniProtKB" id="O70897"/>
    </source>
</evidence>
<evidence type="ECO:0000255" key="3"/>
<evidence type="ECO:0000255" key="4">
    <source>
        <dbReference type="HAMAP-Rule" id="MF_04081"/>
    </source>
</evidence>
<evidence type="ECO:0000305" key="5"/>
<sequence>MENRWQVMIVWQVDRMRIRTWKSLVKHHMYVSGKARGWFYRHHYESPHPRISSEVHIPLGDARLVITTYWGLHTGERDWHLGQGVSIEWRKKRYSTQVDPELADQLIHLYYFDCFSDSAIRKALLGHIVSPR</sequence>
<comment type="function">
    <text evidence="4">Counteracts the innate antiviral activity of host APOBEC3F and APOBEC3G by promoting their ubiquitination and degradation. Acts as a substrate recognition component of an E3 ubiquitin-protein ligase complex: mechanistically, Vif hijacks a host cullin-5-RING E3 ubiquitin-protein ligase complex (ECS complex) and the transcription coactivator CBFB/CBF-beta to form an active E3 ubiquitin-protein ligase complex that targets APOBEC3G and APOBEC3F for polyubiquitination, leading to their degradation by the proteasome. Vif interaction with APOBEC3G also blocks its cytidine deaminase activity in a proteasome-independent manner, suggesting a dual inhibitory mechanism. May interact directly with APOBEC3G mRNA in order to inhibit its translation. Association with CBFB/CBF-beta also inhibits the transcription coactivator activity of CBFB/CBF-beta. Seems to play a role in viral morphology by affecting the stability of the viral nucleoprotein core. Finally, Vif also contributes to the G2 cell cycle arrest observed in HIV infected cells.</text>
</comment>
<comment type="subunit">
    <text evidence="2">Homomultimer; in vitro and presumably in vivo. Interacts with viral RNA and Pr55Gag precursor; these interactions mediate Vif incorporation into the virion. Interacts with the viral reverse transcriptase. Forms cullin-5-RING E3 ubiquitin-protein ligase complex (ECS complex) by interacting with host CUL5, RBX2, elongin BC complex (ELOB and ELOC) and CBFB/CBF-beta. Within the ECS complex, Vif interacts directly with host CUL5, ELOC and APOBEC (APOBEC3F and APOBEC3G) substrates. The ECS complex also contains some single-stranded RNA (ssRNA) that acts as a glue that bridges Vif with APOBEC (APOBEC3F and APOBEC3G) substrates. Interacts with host UBCE7IP1 isoform 3/ZIN and possibly with SAT. Interacts with host tyrosine kinases HCK and FYN; these interactions may decrease level of phosphorylated APOBEC3G incorporation into virions. Interacts with host ABCE1; this interaction may play a role in protecting viral RNA from damage during viral assembly. Interacts with host MDM2; this interaction targets Vif for degradation by the proteasome.</text>
</comment>
<comment type="subcellular location">
    <subcellularLocation>
        <location evidence="1">Host cytoplasm</location>
    </subcellularLocation>
    <subcellularLocation>
        <location evidence="1">Host cell membrane</location>
        <topology evidence="1">Peripheral membrane protein</topology>
        <orientation evidence="1">Cytoplasmic side</orientation>
    </subcellularLocation>
    <subcellularLocation>
        <location evidence="1">Virion</location>
    </subcellularLocation>
    <text evidence="1">In the cytoplasm, seems to colocalize with intermediate filament vimentin. A fraction is associated with the cytoplasmic side of cellular membranes, presumably via the interaction with Pr55Gag precursor. Incorporated in virions at a ratio of approximately 7 to 20 molecules per virion (By similarity).</text>
</comment>
<comment type="induction">
    <text>Expressed late during infection in a Rev-dependent manner.</text>
</comment>
<comment type="domain">
    <text evidence="1">The BC-like-box motif mediates the interaction with elongin BC complex.</text>
</comment>
<comment type="PTM">
    <text evidence="1">Processed in virion by the viral protease.</text>
</comment>
<comment type="PTM">
    <text evidence="1">Highly phosphorylated on serine and threonine residues. Thr-96 is phosphorylated by the mitogen activated kinase MAP4K1 (By similarity).</text>
</comment>
<comment type="PTM">
    <text evidence="1">Polyubiquitinated and degraded by the proteasome in the presence of APOBEC3G.</text>
</comment>
<comment type="miscellaneous">
    <text evidence="1">Required for replication in 'nonpermissive' cells, including primary T-cells, macrophages and certain T-cell lines, but is dispensable for replication in 'permissive' cell lines, such as 293T cells. In nonpermissive cells, Vif-defective viruses can produce virions, but they fail to complete reverse transcription and cannot successfully infect new cells (By similarity).</text>
</comment>
<comment type="miscellaneous">
    <text evidence="1">Vif-defective viruses show catastrophic failure in reverse transcription due to APOBEC-induced mutations that initiate a DNA base repair pathway and compromise the structural integrity of the ssDNA. In the absence of Vif, the virion is morphologically abnormal (By similarity).</text>
</comment>
<comment type="miscellaneous">
    <text>HIV-1 lineages are divided in three main groups, M (for Major), O (for Outlier), and N (for New, or Non-M, Non-O). The vast majority of strains found worldwide belong to the group M. Group O seems to be endemic to and largely confined to Cameroon and neighboring countries in West Central Africa, where these viruses represent a small minority of HIV-1 strains. The group N is represented by a limited number of isolates from Cameroonian persons. The group M is further subdivided in 9 clades or subtypes (A to D, F to H, J and K).</text>
</comment>
<comment type="similarity">
    <text evidence="5">Belongs to the primate lentivirus group Vif protein family.</text>
</comment>
<name>VIF_HV1LW</name>
<proteinExistence type="evidence at transcript level"/>
<reference key="1">
    <citation type="journal article" date="1994" name="AIDS Res. Hum. Retroviruses">
        <title>Viral variability and serum antibody response in a laboratory worker infected with HIV type 1 (HTLV type IIIB).</title>
        <authorList>
            <person name="Reitz M.S. Jr."/>
            <person name="Hall L."/>
            <person name="Robert-Guroff M."/>
            <person name="Lautenberger J.A."/>
            <person name="Hahn B.M."/>
            <person name="Shaw G.M."/>
            <person name="Kong L.I."/>
            <person name="Weiss S.H."/>
            <person name="Waters D."/>
            <person name="Gallo R.C."/>
            <person name="Blattner W."/>
        </authorList>
    </citation>
    <scope>NUCLEOTIDE SEQUENCE [GENOMIC RNA]</scope>
</reference>
<organismHost>
    <name type="scientific">Homo sapiens</name>
    <name type="common">Human</name>
    <dbReference type="NCBI Taxonomy" id="9606"/>
</organismHost>
<protein>
    <recommendedName>
        <fullName>Truncated virion infectivity factor</fullName>
        <shortName>Vif</shortName>
    </recommendedName>
    <alternativeName>
        <fullName>SOR protein</fullName>
    </alternativeName>
    <component>
        <recommendedName>
            <fullName>Truncated p17</fullName>
        </recommendedName>
    </component>
</protein>
<keyword id="KW-0014">AIDS</keyword>
<keyword id="KW-1032">Host cell membrane</keyword>
<keyword id="KW-1035">Host cytoplasm</keyword>
<keyword id="KW-1043">Host membrane</keyword>
<keyword id="KW-0945">Host-virus interaction</keyword>
<keyword id="KW-0472">Membrane</keyword>
<keyword id="KW-0479">Metal-binding</keyword>
<keyword id="KW-0597">Phosphoprotein</keyword>
<keyword id="KW-0694">RNA-binding</keyword>
<keyword id="KW-0832">Ubl conjugation</keyword>
<keyword id="KW-0833">Ubl conjugation pathway</keyword>
<keyword id="KW-0946">Virion</keyword>
<keyword id="KW-0862">Zinc</keyword>
<organism>
    <name type="scientific">Human immunodeficiency virus type 1 group M subtype B (isolate LW123)</name>
    <name type="common">HIV-1</name>
    <dbReference type="NCBI Taxonomy" id="82834"/>
    <lineage>
        <taxon>Viruses</taxon>
        <taxon>Riboviria</taxon>
        <taxon>Pararnavirae</taxon>
        <taxon>Artverviricota</taxon>
        <taxon>Revtraviricetes</taxon>
        <taxon>Ortervirales</taxon>
        <taxon>Retroviridae</taxon>
        <taxon>Orthoretrovirinae</taxon>
        <taxon>Lentivirus</taxon>
        <taxon>Human immunodeficiency virus type 1</taxon>
    </lineage>
</organism>
<feature type="chain" id="PRO_0000085313" description="Truncated virion infectivity factor">
    <location>
        <begin position="1"/>
        <end position="132"/>
    </location>
</feature>
<feature type="chain" id="PRO_0000297501" description="Truncated p17" evidence="1">
    <location>
        <begin position="1"/>
        <end status="unknown"/>
    </location>
</feature>
<feature type="region of interest" description="Interaction with host APOBEC3F; F1-box" evidence="1">
    <location>
        <begin position="14"/>
        <end position="17"/>
    </location>
</feature>
<feature type="region of interest" description="Interaction with host APOBEC3G; G-box" evidence="1">
    <location>
        <begin position="40"/>
        <end position="44"/>
    </location>
</feature>
<feature type="region of interest" description="Interaction with host APOBEC3F and APOBEC3G; FG-box" evidence="1">
    <location>
        <begin position="54"/>
        <end position="72"/>
    </location>
</feature>
<feature type="region of interest" description="Interaction with host APOBEC3F; F2-box" evidence="1">
    <location>
        <begin position="74"/>
        <end position="79"/>
    </location>
</feature>
<feature type="region of interest" description="RNA-binding" evidence="3">
    <location>
        <begin position="75"/>
        <end position="114"/>
    </location>
</feature>
<feature type="binding site" evidence="4">
    <location>
        <position position="108"/>
    </location>
    <ligand>
        <name>Zn(2+)</name>
        <dbReference type="ChEBI" id="CHEBI:29105"/>
    </ligand>
</feature>
<feature type="binding site" evidence="4">
    <location>
        <position position="114"/>
    </location>
    <ligand>
        <name>Zn(2+)</name>
        <dbReference type="ChEBI" id="CHEBI:29105"/>
    </ligand>
</feature>
<feature type="modified residue" description="Phosphothreonine; by host MAP4K1" evidence="1">
    <location>
        <position position="96"/>
    </location>
</feature>
<dbReference type="EMBL" id="U12055">
    <property type="protein sequence ID" value="AAA76687.1"/>
    <property type="molecule type" value="Genomic_RNA"/>
</dbReference>
<dbReference type="SMR" id="Q70623"/>
<dbReference type="Proteomes" id="UP000165413">
    <property type="component" value="Genome"/>
</dbReference>
<dbReference type="GO" id="GO:0030430">
    <property type="term" value="C:host cell cytoplasm"/>
    <property type="evidence" value="ECO:0007669"/>
    <property type="project" value="UniProtKB-SubCell"/>
</dbReference>
<dbReference type="GO" id="GO:0020002">
    <property type="term" value="C:host cell plasma membrane"/>
    <property type="evidence" value="ECO:0007669"/>
    <property type="project" value="UniProtKB-SubCell"/>
</dbReference>
<dbReference type="GO" id="GO:0016020">
    <property type="term" value="C:membrane"/>
    <property type="evidence" value="ECO:0007669"/>
    <property type="project" value="UniProtKB-KW"/>
</dbReference>
<dbReference type="GO" id="GO:0044423">
    <property type="term" value="C:virion component"/>
    <property type="evidence" value="ECO:0007669"/>
    <property type="project" value="UniProtKB-KW"/>
</dbReference>
<dbReference type="GO" id="GO:0046872">
    <property type="term" value="F:metal ion binding"/>
    <property type="evidence" value="ECO:0007669"/>
    <property type="project" value="UniProtKB-KW"/>
</dbReference>
<dbReference type="GO" id="GO:0003723">
    <property type="term" value="F:RNA binding"/>
    <property type="evidence" value="ECO:0007669"/>
    <property type="project" value="UniProtKB-KW"/>
</dbReference>
<dbReference type="GO" id="GO:0019058">
    <property type="term" value="P:viral life cycle"/>
    <property type="evidence" value="ECO:0007669"/>
    <property type="project" value="InterPro"/>
</dbReference>
<dbReference type="InterPro" id="IPR000475">
    <property type="entry name" value="Vif"/>
</dbReference>
<dbReference type="Pfam" id="PF00559">
    <property type="entry name" value="Vif"/>
    <property type="match status" value="1"/>
</dbReference>
<dbReference type="PRINTS" id="PR00349">
    <property type="entry name" value="VIRIONINFFCT"/>
</dbReference>
<accession>Q70623</accession>
<gene>
    <name type="primary">vif</name>
</gene>